<keyword id="KW-0963">Cytoplasm</keyword>
<keyword id="KW-0329">Glyoxylate bypass</keyword>
<keyword id="KW-0460">Magnesium</keyword>
<keyword id="KW-0479">Metal-binding</keyword>
<keyword id="KW-0558">Oxidation</keyword>
<keyword id="KW-1185">Reference proteome</keyword>
<keyword id="KW-0808">Transferase</keyword>
<keyword id="KW-0816">Tricarboxylic acid cycle</keyword>
<evidence type="ECO:0000255" key="1">
    <source>
        <dbReference type="HAMAP-Rule" id="MF_00641"/>
    </source>
</evidence>
<protein>
    <recommendedName>
        <fullName evidence="1">Malate synthase G</fullName>
        <ecNumber evidence="1">2.3.3.9</ecNumber>
    </recommendedName>
</protein>
<proteinExistence type="inferred from homology"/>
<organism>
    <name type="scientific">Paraburkholderia xenovorans (strain LB400)</name>
    <dbReference type="NCBI Taxonomy" id="266265"/>
    <lineage>
        <taxon>Bacteria</taxon>
        <taxon>Pseudomonadati</taxon>
        <taxon>Pseudomonadota</taxon>
        <taxon>Betaproteobacteria</taxon>
        <taxon>Burkholderiales</taxon>
        <taxon>Burkholderiaceae</taxon>
        <taxon>Paraburkholderia</taxon>
    </lineage>
</organism>
<accession>Q13YU3</accession>
<dbReference type="EC" id="2.3.3.9" evidence="1"/>
<dbReference type="EMBL" id="CP000270">
    <property type="protein sequence ID" value="ABE30746.1"/>
    <property type="molecule type" value="Genomic_DNA"/>
</dbReference>
<dbReference type="RefSeq" id="WP_011488362.1">
    <property type="nucleotide sequence ID" value="NC_007951.1"/>
</dbReference>
<dbReference type="SMR" id="Q13YU3"/>
<dbReference type="STRING" id="266265.Bxe_A2223"/>
<dbReference type="KEGG" id="bxb:DR64_4375"/>
<dbReference type="KEGG" id="bxe:Bxe_A2223"/>
<dbReference type="PATRIC" id="fig|266265.5.peg.2309"/>
<dbReference type="eggNOG" id="COG2225">
    <property type="taxonomic scope" value="Bacteria"/>
</dbReference>
<dbReference type="OrthoDB" id="9762054at2"/>
<dbReference type="UniPathway" id="UPA00703">
    <property type="reaction ID" value="UER00720"/>
</dbReference>
<dbReference type="Proteomes" id="UP000001817">
    <property type="component" value="Chromosome 1"/>
</dbReference>
<dbReference type="GO" id="GO:0005829">
    <property type="term" value="C:cytosol"/>
    <property type="evidence" value="ECO:0007669"/>
    <property type="project" value="TreeGrafter"/>
</dbReference>
<dbReference type="GO" id="GO:0000287">
    <property type="term" value="F:magnesium ion binding"/>
    <property type="evidence" value="ECO:0007669"/>
    <property type="project" value="TreeGrafter"/>
</dbReference>
<dbReference type="GO" id="GO:0004474">
    <property type="term" value="F:malate synthase activity"/>
    <property type="evidence" value="ECO:0007669"/>
    <property type="project" value="UniProtKB-UniRule"/>
</dbReference>
<dbReference type="GO" id="GO:0009436">
    <property type="term" value="P:glyoxylate catabolic process"/>
    <property type="evidence" value="ECO:0007669"/>
    <property type="project" value="TreeGrafter"/>
</dbReference>
<dbReference type="GO" id="GO:0006097">
    <property type="term" value="P:glyoxylate cycle"/>
    <property type="evidence" value="ECO:0007669"/>
    <property type="project" value="UniProtKB-UniRule"/>
</dbReference>
<dbReference type="GO" id="GO:0006099">
    <property type="term" value="P:tricarboxylic acid cycle"/>
    <property type="evidence" value="ECO:0007669"/>
    <property type="project" value="UniProtKB-KW"/>
</dbReference>
<dbReference type="CDD" id="cd00728">
    <property type="entry name" value="malate_synt_G"/>
    <property type="match status" value="1"/>
</dbReference>
<dbReference type="FunFam" id="3.20.20.360:FF:000002">
    <property type="entry name" value="Malate synthase G"/>
    <property type="match status" value="1"/>
</dbReference>
<dbReference type="Gene3D" id="3.20.20.360">
    <property type="entry name" value="Malate synthase, domain 3"/>
    <property type="match status" value="2"/>
</dbReference>
<dbReference type="Gene3D" id="1.20.1220.12">
    <property type="entry name" value="Malate synthase, domain III"/>
    <property type="match status" value="1"/>
</dbReference>
<dbReference type="HAMAP" id="MF_00641">
    <property type="entry name" value="Malate_synth_G"/>
    <property type="match status" value="1"/>
</dbReference>
<dbReference type="InterPro" id="IPR044856">
    <property type="entry name" value="Malate_synth_C_sf"/>
</dbReference>
<dbReference type="InterPro" id="IPR011076">
    <property type="entry name" value="Malate_synth_sf"/>
</dbReference>
<dbReference type="InterPro" id="IPR001465">
    <property type="entry name" value="Malate_synthase_TIM"/>
</dbReference>
<dbReference type="InterPro" id="IPR006253">
    <property type="entry name" value="Malate_synthG"/>
</dbReference>
<dbReference type="InterPro" id="IPR048355">
    <property type="entry name" value="MS_C"/>
</dbReference>
<dbReference type="InterPro" id="IPR048356">
    <property type="entry name" value="MS_N"/>
</dbReference>
<dbReference type="InterPro" id="IPR046363">
    <property type="entry name" value="MS_N_TIM-barrel_dom"/>
</dbReference>
<dbReference type="InterPro" id="IPR048357">
    <property type="entry name" value="MSG_insertion"/>
</dbReference>
<dbReference type="NCBIfam" id="TIGR01345">
    <property type="entry name" value="malate_syn_G"/>
    <property type="match status" value="1"/>
</dbReference>
<dbReference type="NCBIfam" id="NF002825">
    <property type="entry name" value="PRK02999.1"/>
    <property type="match status" value="1"/>
</dbReference>
<dbReference type="PANTHER" id="PTHR42739">
    <property type="entry name" value="MALATE SYNTHASE G"/>
    <property type="match status" value="1"/>
</dbReference>
<dbReference type="PANTHER" id="PTHR42739:SF1">
    <property type="entry name" value="MALATE SYNTHASE G"/>
    <property type="match status" value="1"/>
</dbReference>
<dbReference type="Pfam" id="PF20659">
    <property type="entry name" value="MS_C"/>
    <property type="match status" value="1"/>
</dbReference>
<dbReference type="Pfam" id="PF20656">
    <property type="entry name" value="MS_N"/>
    <property type="match status" value="1"/>
</dbReference>
<dbReference type="Pfam" id="PF01274">
    <property type="entry name" value="MS_TIM-barrel"/>
    <property type="match status" value="1"/>
</dbReference>
<dbReference type="Pfam" id="PF20658">
    <property type="entry name" value="MSG_insertion"/>
    <property type="match status" value="1"/>
</dbReference>
<dbReference type="SUPFAM" id="SSF51645">
    <property type="entry name" value="Malate synthase G"/>
    <property type="match status" value="1"/>
</dbReference>
<name>MASZ_PARXL</name>
<gene>
    <name evidence="1" type="primary">glcB</name>
    <name type="ordered locus">Bxeno_A2208</name>
    <name type="ORF">Bxe_A2223</name>
</gene>
<feature type="chain" id="PRO_1000056900" description="Malate synthase G">
    <location>
        <begin position="1"/>
        <end position="724"/>
    </location>
</feature>
<feature type="active site" description="Proton acceptor" evidence="1">
    <location>
        <position position="340"/>
    </location>
</feature>
<feature type="active site" description="Proton donor" evidence="1">
    <location>
        <position position="633"/>
    </location>
</feature>
<feature type="binding site" evidence="1">
    <location>
        <position position="118"/>
    </location>
    <ligand>
        <name>acetyl-CoA</name>
        <dbReference type="ChEBI" id="CHEBI:57288"/>
    </ligand>
</feature>
<feature type="binding site" evidence="1">
    <location>
        <begin position="125"/>
        <end position="126"/>
    </location>
    <ligand>
        <name>acetyl-CoA</name>
        <dbReference type="ChEBI" id="CHEBI:57288"/>
    </ligand>
</feature>
<feature type="binding site" evidence="1">
    <location>
        <position position="275"/>
    </location>
    <ligand>
        <name>acetyl-CoA</name>
        <dbReference type="ChEBI" id="CHEBI:57288"/>
    </ligand>
</feature>
<feature type="binding site" evidence="1">
    <location>
        <position position="312"/>
    </location>
    <ligand>
        <name>acetyl-CoA</name>
        <dbReference type="ChEBI" id="CHEBI:57288"/>
    </ligand>
</feature>
<feature type="binding site" evidence="1">
    <location>
        <position position="340"/>
    </location>
    <ligand>
        <name>glyoxylate</name>
        <dbReference type="ChEBI" id="CHEBI:36655"/>
    </ligand>
</feature>
<feature type="binding site" evidence="1">
    <location>
        <position position="429"/>
    </location>
    <ligand>
        <name>glyoxylate</name>
        <dbReference type="ChEBI" id="CHEBI:36655"/>
    </ligand>
</feature>
<feature type="binding site" evidence="1">
    <location>
        <position position="429"/>
    </location>
    <ligand>
        <name>Mg(2+)</name>
        <dbReference type="ChEBI" id="CHEBI:18420"/>
    </ligand>
</feature>
<feature type="binding site" evidence="1">
    <location>
        <begin position="454"/>
        <end position="457"/>
    </location>
    <ligand>
        <name>glyoxylate</name>
        <dbReference type="ChEBI" id="CHEBI:36655"/>
    </ligand>
</feature>
<feature type="binding site" evidence="1">
    <location>
        <position position="457"/>
    </location>
    <ligand>
        <name>Mg(2+)</name>
        <dbReference type="ChEBI" id="CHEBI:18420"/>
    </ligand>
</feature>
<feature type="binding site" evidence="1">
    <location>
        <position position="538"/>
    </location>
    <ligand>
        <name>acetyl-CoA</name>
        <dbReference type="ChEBI" id="CHEBI:57288"/>
    </ligand>
</feature>
<feature type="modified residue" description="Cysteine sulfenic acid (-SOH)" evidence="1">
    <location>
        <position position="619"/>
    </location>
</feature>
<sequence length="724" mass="79450">MTQMNPRGGLQVAANLDQFVETEALPGTGLDSAAFWSGFDALVHELAPKNRALLAERDRLQTELDNWHRANPGPVRDLRAYRAFLEGIGYIVPVPASVKATTDHVDTEIAEQAGPQLVVPLSNQRYALNAANARWGSLYDALYGTDAIPEANGAEKQKAFNPVRGAAVIAYARRFLDQAAPLANGSHADATRYGVEGGKLVVTLKNGTSELKTPAQFIGYQGEESAPSAVLLKHNGLHFEIQIDANDSIGKTDSAHVKDVVVEAAVSTIIDCEDSVAAVDADDKVQLYRNWLGLMNGDLTEEVTKNGKTFTRRLNADRVYTAANGTAPVVLHGRSLLFIRNVGHLMTNPAVLTKDGHEIPEGILDAVITSLCALHDRKHKLNSRTGSIYIVKPKMHGPAEVAFASELFARVEDLLKLPRNTIKMGIMDEERRTSVNLLACINEARERVAFINTGFLDRTGDEMHTAMEAGPMLRKGDMKSSAWIAAYERSNVLVGLSAGLRGRSQIGKGMWAMPDLMHAMLEQKIAHPKAGANTAWVPSPTAATLHALHYHQVDVQAVQQELERTDYAKVRDELLDGLLTIPVVAEAKWSDDEIRSEIDNNAQGILGYVVRWIDQGVGCSKVPDIHNVGLMEDRATLRISSQHIANWLYHGVVKRELVEETFRRMARVVDEQNAGDPLYKPMAPGFDTIAFKAAQALVFEGRQQPSGYTEPLLHKFRLEVKKEA</sequence>
<reference key="1">
    <citation type="journal article" date="2006" name="Proc. Natl. Acad. Sci. U.S.A.">
        <title>Burkholderia xenovorans LB400 harbors a multi-replicon, 9.73-Mbp genome shaped for versatility.</title>
        <authorList>
            <person name="Chain P.S.G."/>
            <person name="Denef V.J."/>
            <person name="Konstantinidis K.T."/>
            <person name="Vergez L.M."/>
            <person name="Agullo L."/>
            <person name="Reyes V.L."/>
            <person name="Hauser L."/>
            <person name="Cordova M."/>
            <person name="Gomez L."/>
            <person name="Gonzalez M."/>
            <person name="Land M."/>
            <person name="Lao V."/>
            <person name="Larimer F."/>
            <person name="LiPuma J.J."/>
            <person name="Mahenthiralingam E."/>
            <person name="Malfatti S.A."/>
            <person name="Marx C.J."/>
            <person name="Parnell J.J."/>
            <person name="Ramette A."/>
            <person name="Richardson P."/>
            <person name="Seeger M."/>
            <person name="Smith D."/>
            <person name="Spilker T."/>
            <person name="Sul W.J."/>
            <person name="Tsoi T.V."/>
            <person name="Ulrich L.E."/>
            <person name="Zhulin I.B."/>
            <person name="Tiedje J.M."/>
        </authorList>
    </citation>
    <scope>NUCLEOTIDE SEQUENCE [LARGE SCALE GENOMIC DNA]</scope>
    <source>
        <strain>LB400</strain>
    </source>
</reference>
<comment type="function">
    <text evidence="1">Involved in the glycolate utilization. Catalyzes the condensation and subsequent hydrolysis of acetyl-coenzyme A (acetyl-CoA) and glyoxylate to form malate and CoA.</text>
</comment>
<comment type="catalytic activity">
    <reaction evidence="1">
        <text>glyoxylate + acetyl-CoA + H2O = (S)-malate + CoA + H(+)</text>
        <dbReference type="Rhea" id="RHEA:18181"/>
        <dbReference type="ChEBI" id="CHEBI:15377"/>
        <dbReference type="ChEBI" id="CHEBI:15378"/>
        <dbReference type="ChEBI" id="CHEBI:15589"/>
        <dbReference type="ChEBI" id="CHEBI:36655"/>
        <dbReference type="ChEBI" id="CHEBI:57287"/>
        <dbReference type="ChEBI" id="CHEBI:57288"/>
        <dbReference type="EC" id="2.3.3.9"/>
    </reaction>
</comment>
<comment type="cofactor">
    <cofactor evidence="1">
        <name>Mg(2+)</name>
        <dbReference type="ChEBI" id="CHEBI:18420"/>
    </cofactor>
</comment>
<comment type="pathway">
    <text evidence="1">Carbohydrate metabolism; glyoxylate cycle; (S)-malate from isocitrate: step 2/2.</text>
</comment>
<comment type="subunit">
    <text evidence="1">Monomer.</text>
</comment>
<comment type="subcellular location">
    <subcellularLocation>
        <location evidence="1">Cytoplasm</location>
    </subcellularLocation>
</comment>
<comment type="similarity">
    <text evidence="1">Belongs to the malate synthase family. GlcB subfamily.</text>
</comment>